<keyword id="KW-1185">Reference proteome</keyword>
<feature type="chain" id="PRO_0000104020" description="Uncharacterized protein Rv2311">
    <location>
        <begin position="1"/>
        <end position="174"/>
    </location>
</feature>
<proteinExistence type="predicted"/>
<organism>
    <name type="scientific">Mycobacterium tuberculosis (strain ATCC 25618 / H37Rv)</name>
    <dbReference type="NCBI Taxonomy" id="83332"/>
    <lineage>
        <taxon>Bacteria</taxon>
        <taxon>Bacillati</taxon>
        <taxon>Actinomycetota</taxon>
        <taxon>Actinomycetes</taxon>
        <taxon>Mycobacteriales</taxon>
        <taxon>Mycobacteriaceae</taxon>
        <taxon>Mycobacterium</taxon>
        <taxon>Mycobacterium tuberculosis complex</taxon>
    </lineage>
</organism>
<protein>
    <recommendedName>
        <fullName>Uncharacterized protein Rv2311</fullName>
    </recommendedName>
</protein>
<accession>P9WLC1</accession>
<accession>L0TAU5</accession>
<accession>P64989</accession>
<accession>P71901</accession>
<reference key="1">
    <citation type="journal article" date="1998" name="Nature">
        <title>Deciphering the biology of Mycobacterium tuberculosis from the complete genome sequence.</title>
        <authorList>
            <person name="Cole S.T."/>
            <person name="Brosch R."/>
            <person name="Parkhill J."/>
            <person name="Garnier T."/>
            <person name="Churcher C.M."/>
            <person name="Harris D.E."/>
            <person name="Gordon S.V."/>
            <person name="Eiglmeier K."/>
            <person name="Gas S."/>
            <person name="Barry C.E. III"/>
            <person name="Tekaia F."/>
            <person name="Badcock K."/>
            <person name="Basham D."/>
            <person name="Brown D."/>
            <person name="Chillingworth T."/>
            <person name="Connor R."/>
            <person name="Davies R.M."/>
            <person name="Devlin K."/>
            <person name="Feltwell T."/>
            <person name="Gentles S."/>
            <person name="Hamlin N."/>
            <person name="Holroyd S."/>
            <person name="Hornsby T."/>
            <person name="Jagels K."/>
            <person name="Krogh A."/>
            <person name="McLean J."/>
            <person name="Moule S."/>
            <person name="Murphy L.D."/>
            <person name="Oliver S."/>
            <person name="Osborne J."/>
            <person name="Quail M.A."/>
            <person name="Rajandream M.A."/>
            <person name="Rogers J."/>
            <person name="Rutter S."/>
            <person name="Seeger K."/>
            <person name="Skelton S."/>
            <person name="Squares S."/>
            <person name="Squares R."/>
            <person name="Sulston J.E."/>
            <person name="Taylor K."/>
            <person name="Whitehead S."/>
            <person name="Barrell B.G."/>
        </authorList>
    </citation>
    <scope>NUCLEOTIDE SEQUENCE [LARGE SCALE GENOMIC DNA]</scope>
    <source>
        <strain>ATCC 25618 / H37Rv</strain>
    </source>
</reference>
<sequence>MAPTGQAVDVAVREGAGDVGYSVERENLPADDPVRNGNRWRVIAVDTEHHRIAARRLGDGARAAFSGDYLHEHITHGYAITVHASQGTTAHSTHAVLGDNTSRATLYVAMTPARESNTAYLCERTAGEGARVDLAGWDLWVSGKAEAMSDEKSASPVWCRVGARCDHRGKRSCW</sequence>
<gene>
    <name type="ordered locus">Rv2311</name>
    <name type="ORF">MTCY3G12.23c</name>
</gene>
<name>Y2311_MYCTU</name>
<dbReference type="EMBL" id="AL123456">
    <property type="protein sequence ID" value="CCP45098.1"/>
    <property type="molecule type" value="Genomic_DNA"/>
</dbReference>
<dbReference type="PIR" id="H70702">
    <property type="entry name" value="H70702"/>
</dbReference>
<dbReference type="RefSeq" id="NP_216827.1">
    <property type="nucleotide sequence ID" value="NC_000962.3"/>
</dbReference>
<dbReference type="RefSeq" id="WP_003411905.1">
    <property type="nucleotide sequence ID" value="NC_000962.3"/>
</dbReference>
<dbReference type="STRING" id="83332.Rv2311"/>
<dbReference type="PaxDb" id="83332-Rv2311"/>
<dbReference type="DNASU" id="885168"/>
<dbReference type="GeneID" id="885168"/>
<dbReference type="KEGG" id="mtu:Rv2311"/>
<dbReference type="KEGG" id="mtv:RVBD_2311"/>
<dbReference type="PATRIC" id="fig|83332.111.peg.2574"/>
<dbReference type="TubercuList" id="Rv2311"/>
<dbReference type="eggNOG" id="COG0507">
    <property type="taxonomic scope" value="Bacteria"/>
</dbReference>
<dbReference type="InParanoid" id="P9WLC1"/>
<dbReference type="OrthoDB" id="4524286at2"/>
<dbReference type="Proteomes" id="UP000001584">
    <property type="component" value="Chromosome"/>
</dbReference>
<dbReference type="CDD" id="cd18809">
    <property type="entry name" value="SF1_C_RecD"/>
    <property type="match status" value="1"/>
</dbReference>
<dbReference type="Gene3D" id="3.40.50.300">
    <property type="entry name" value="P-loop containing nucleotide triphosphate hydrolases"/>
    <property type="match status" value="1"/>
</dbReference>
<dbReference type="InterPro" id="IPR027417">
    <property type="entry name" value="P-loop_NTPase"/>
</dbReference>
<dbReference type="SUPFAM" id="SSF52540">
    <property type="entry name" value="P-loop containing nucleoside triphosphate hydrolases"/>
    <property type="match status" value="1"/>
</dbReference>